<reference key="1">
    <citation type="journal article" date="2008" name="Peptides">
        <title>Two new 4-Cys conotoxins (framework 14) of the vermivorous snail Conus austini from the Gulf of Mexico with activity in the central nervous system of mice.</title>
        <authorList>
            <person name="Zugasti-Cruz A."/>
            <person name="Aguilar M.B."/>
            <person name="Falcon A."/>
            <person name="Olivera B.M."/>
            <person name="Heimer de la Cotera E.P."/>
        </authorList>
    </citation>
    <scope>PROTEIN SEQUENCE</scope>
    <scope>FUNCTION</scope>
    <scope>BIOASSAY</scope>
    <scope>SUBCELLULAR LOCATION</scope>
    <scope>MASS SPECTROMETRY</scope>
    <source>
        <tissue>Venom</tissue>
    </source>
</reference>
<name>CLEA_CONCF</name>
<dbReference type="SMR" id="P0C6S2"/>
<dbReference type="ConoServer" id="2828">
    <property type="toxin name" value="AsXIVA"/>
</dbReference>
<dbReference type="GO" id="GO:0005576">
    <property type="term" value="C:extracellular region"/>
    <property type="evidence" value="ECO:0007669"/>
    <property type="project" value="UniProtKB-SubCell"/>
</dbReference>
<dbReference type="GO" id="GO:0090729">
    <property type="term" value="F:toxin activity"/>
    <property type="evidence" value="ECO:0007669"/>
    <property type="project" value="UniProtKB-KW"/>
</dbReference>
<accession>P0C6S2</accession>
<evidence type="ECO:0000250" key="1"/>
<evidence type="ECO:0000250" key="2">
    <source>
        <dbReference type="UniProtKB" id="P84704"/>
    </source>
</evidence>
<evidence type="ECO:0000269" key="3">
    <source>
    </source>
</evidence>
<evidence type="ECO:0000303" key="4">
    <source>
    </source>
</evidence>
<evidence type="ECO:0000305" key="5"/>
<evidence type="ECO:0000305" key="6">
    <source>
    </source>
</evidence>
<comment type="function">
    <text evidence="1 3">In vivo, intracranial injection, elicits scratching and grooming activity in mice.</text>
</comment>
<comment type="subcellular location">
    <subcellularLocation>
        <location evidence="3">Secreted</location>
    </subcellularLocation>
</comment>
<comment type="tissue specificity">
    <text evidence="6">Expressed by the venom duct.</text>
</comment>
<comment type="domain">
    <text evidence="5">The cysteine framework is XIV (C-C-C-C).</text>
</comment>
<comment type="mass spectrometry">
    <text>Monoisotopic mass.</text>
</comment>
<comment type="similarity">
    <text evidence="5">Belongs to the conotoxin L superfamily.</text>
</comment>
<keyword id="KW-0903">Direct protein sequencing</keyword>
<keyword id="KW-1015">Disulfide bond</keyword>
<keyword id="KW-0528">Neurotoxin</keyword>
<keyword id="KW-0964">Secreted</keyword>
<keyword id="KW-0800">Toxin</keyword>
<organism>
    <name type="scientific">Conus cancellatus</name>
    <name type="common">Cancellate cone</name>
    <name type="synonym">Conus austini</name>
    <dbReference type="NCBI Taxonomy" id="289020"/>
    <lineage>
        <taxon>Eukaryota</taxon>
        <taxon>Metazoa</taxon>
        <taxon>Spiralia</taxon>
        <taxon>Lophotrochozoa</taxon>
        <taxon>Mollusca</taxon>
        <taxon>Gastropoda</taxon>
        <taxon>Caenogastropoda</taxon>
        <taxon>Neogastropoda</taxon>
        <taxon>Conoidea</taxon>
        <taxon>Conidae</taxon>
        <taxon>Conus</taxon>
        <taxon>Dauciconus</taxon>
    </lineage>
</organism>
<feature type="peptide" id="PRO_0000326393" description="Conotoxin as14a" evidence="3">
    <location>
        <begin position="1"/>
        <end position="27"/>
    </location>
</feature>
<feature type="disulfide bond" evidence="2">
    <location>
        <begin position="6"/>
        <end position="26"/>
    </location>
</feature>
<feature type="disulfide bond" evidence="2">
    <location>
        <begin position="10"/>
        <end position="22"/>
    </location>
</feature>
<proteinExistence type="evidence at protein level"/>
<sequence>GGVGRCIYNCMNSGGGLNFIQCKTMCY</sequence>
<protein>
    <recommendedName>
        <fullName evidence="4">Conotoxin as14a</fullName>
    </recommendedName>
    <alternativeName>
        <fullName evidence="5">Conotoxin AsXIVA</fullName>
    </alternativeName>
</protein>